<name>DNAA_BACC7</name>
<dbReference type="EMBL" id="CP001177">
    <property type="protein sequence ID" value="ACJ78594.1"/>
    <property type="molecule type" value="Genomic_DNA"/>
</dbReference>
<dbReference type="SMR" id="B7HPR7"/>
<dbReference type="KEGG" id="bcr:BCAH187_A0001"/>
<dbReference type="HOGENOM" id="CLU_026910_3_1_9"/>
<dbReference type="Proteomes" id="UP000002214">
    <property type="component" value="Chromosome"/>
</dbReference>
<dbReference type="GO" id="GO:0005737">
    <property type="term" value="C:cytoplasm"/>
    <property type="evidence" value="ECO:0007669"/>
    <property type="project" value="UniProtKB-SubCell"/>
</dbReference>
<dbReference type="GO" id="GO:0005886">
    <property type="term" value="C:plasma membrane"/>
    <property type="evidence" value="ECO:0007669"/>
    <property type="project" value="TreeGrafter"/>
</dbReference>
<dbReference type="GO" id="GO:0005524">
    <property type="term" value="F:ATP binding"/>
    <property type="evidence" value="ECO:0007669"/>
    <property type="project" value="UniProtKB-UniRule"/>
</dbReference>
<dbReference type="GO" id="GO:0016887">
    <property type="term" value="F:ATP hydrolysis activity"/>
    <property type="evidence" value="ECO:0007669"/>
    <property type="project" value="InterPro"/>
</dbReference>
<dbReference type="GO" id="GO:0003688">
    <property type="term" value="F:DNA replication origin binding"/>
    <property type="evidence" value="ECO:0007669"/>
    <property type="project" value="UniProtKB-UniRule"/>
</dbReference>
<dbReference type="GO" id="GO:0008289">
    <property type="term" value="F:lipid binding"/>
    <property type="evidence" value="ECO:0007669"/>
    <property type="project" value="UniProtKB-KW"/>
</dbReference>
<dbReference type="GO" id="GO:0006270">
    <property type="term" value="P:DNA replication initiation"/>
    <property type="evidence" value="ECO:0007669"/>
    <property type="project" value="UniProtKB-UniRule"/>
</dbReference>
<dbReference type="GO" id="GO:0006275">
    <property type="term" value="P:regulation of DNA replication"/>
    <property type="evidence" value="ECO:0007669"/>
    <property type="project" value="UniProtKB-UniRule"/>
</dbReference>
<dbReference type="CDD" id="cd00009">
    <property type="entry name" value="AAA"/>
    <property type="match status" value="1"/>
</dbReference>
<dbReference type="CDD" id="cd06571">
    <property type="entry name" value="Bac_DnaA_C"/>
    <property type="match status" value="1"/>
</dbReference>
<dbReference type="FunFam" id="1.10.1750.10:FF:000003">
    <property type="entry name" value="Chromosomal replication initiator protein DnaA"/>
    <property type="match status" value="1"/>
</dbReference>
<dbReference type="FunFam" id="1.10.8.60:FF:000003">
    <property type="entry name" value="Chromosomal replication initiator protein DnaA"/>
    <property type="match status" value="1"/>
</dbReference>
<dbReference type="FunFam" id="3.30.300.180:FF:000002">
    <property type="entry name" value="Chromosomal replication initiator protein DnaA"/>
    <property type="match status" value="1"/>
</dbReference>
<dbReference type="FunFam" id="3.40.50.300:FF:000150">
    <property type="entry name" value="Chromosomal replication initiator protein DnaA"/>
    <property type="match status" value="1"/>
</dbReference>
<dbReference type="Gene3D" id="1.10.1750.10">
    <property type="match status" value="1"/>
</dbReference>
<dbReference type="Gene3D" id="1.10.8.60">
    <property type="match status" value="1"/>
</dbReference>
<dbReference type="Gene3D" id="3.30.300.180">
    <property type="match status" value="1"/>
</dbReference>
<dbReference type="Gene3D" id="3.40.50.300">
    <property type="entry name" value="P-loop containing nucleotide triphosphate hydrolases"/>
    <property type="match status" value="1"/>
</dbReference>
<dbReference type="HAMAP" id="MF_00377">
    <property type="entry name" value="DnaA_bact"/>
    <property type="match status" value="1"/>
</dbReference>
<dbReference type="InterPro" id="IPR003593">
    <property type="entry name" value="AAA+_ATPase"/>
</dbReference>
<dbReference type="InterPro" id="IPR001957">
    <property type="entry name" value="Chromosome_initiator_DnaA"/>
</dbReference>
<dbReference type="InterPro" id="IPR020591">
    <property type="entry name" value="Chromosome_initiator_DnaA-like"/>
</dbReference>
<dbReference type="InterPro" id="IPR018312">
    <property type="entry name" value="Chromosome_initiator_DnaA_CS"/>
</dbReference>
<dbReference type="InterPro" id="IPR013159">
    <property type="entry name" value="DnaA_C"/>
</dbReference>
<dbReference type="InterPro" id="IPR013317">
    <property type="entry name" value="DnaA_dom"/>
</dbReference>
<dbReference type="InterPro" id="IPR024633">
    <property type="entry name" value="DnaA_N_dom"/>
</dbReference>
<dbReference type="InterPro" id="IPR038454">
    <property type="entry name" value="DnaA_N_sf"/>
</dbReference>
<dbReference type="InterPro" id="IPR027417">
    <property type="entry name" value="P-loop_NTPase"/>
</dbReference>
<dbReference type="InterPro" id="IPR010921">
    <property type="entry name" value="Trp_repressor/repl_initiator"/>
</dbReference>
<dbReference type="NCBIfam" id="TIGR00362">
    <property type="entry name" value="DnaA"/>
    <property type="match status" value="1"/>
</dbReference>
<dbReference type="NCBIfam" id="NF010686">
    <property type="entry name" value="PRK14086.1"/>
    <property type="match status" value="1"/>
</dbReference>
<dbReference type="PANTHER" id="PTHR30050">
    <property type="entry name" value="CHROMOSOMAL REPLICATION INITIATOR PROTEIN DNAA"/>
    <property type="match status" value="1"/>
</dbReference>
<dbReference type="PANTHER" id="PTHR30050:SF2">
    <property type="entry name" value="CHROMOSOMAL REPLICATION INITIATOR PROTEIN DNAA"/>
    <property type="match status" value="1"/>
</dbReference>
<dbReference type="Pfam" id="PF00308">
    <property type="entry name" value="Bac_DnaA"/>
    <property type="match status" value="1"/>
</dbReference>
<dbReference type="Pfam" id="PF08299">
    <property type="entry name" value="Bac_DnaA_C"/>
    <property type="match status" value="1"/>
</dbReference>
<dbReference type="Pfam" id="PF11638">
    <property type="entry name" value="DnaA_N"/>
    <property type="match status" value="1"/>
</dbReference>
<dbReference type="PRINTS" id="PR00051">
    <property type="entry name" value="DNAA"/>
</dbReference>
<dbReference type="SMART" id="SM00382">
    <property type="entry name" value="AAA"/>
    <property type="match status" value="1"/>
</dbReference>
<dbReference type="SMART" id="SM00760">
    <property type="entry name" value="Bac_DnaA_C"/>
    <property type="match status" value="1"/>
</dbReference>
<dbReference type="SUPFAM" id="SSF52540">
    <property type="entry name" value="P-loop containing nucleoside triphosphate hydrolases"/>
    <property type="match status" value="1"/>
</dbReference>
<dbReference type="SUPFAM" id="SSF48295">
    <property type="entry name" value="TrpR-like"/>
    <property type="match status" value="1"/>
</dbReference>
<dbReference type="PROSITE" id="PS01008">
    <property type="entry name" value="DNAA"/>
    <property type="match status" value="1"/>
</dbReference>
<feature type="chain" id="PRO_1000121947" description="Chromosomal replication initiator protein DnaA">
    <location>
        <begin position="1"/>
        <end position="446"/>
    </location>
</feature>
<feature type="region of interest" description="Domain I, interacts with DnaA modulators" evidence="1">
    <location>
        <begin position="1"/>
        <end position="92"/>
    </location>
</feature>
<feature type="region of interest" description="Disordered" evidence="2">
    <location>
        <begin position="87"/>
        <end position="107"/>
    </location>
</feature>
<feature type="region of interest" description="Domain II" evidence="1">
    <location>
        <begin position="93"/>
        <end position="109"/>
    </location>
</feature>
<feature type="region of interest" description="Domain III, AAA+ region" evidence="1">
    <location>
        <begin position="110"/>
        <end position="326"/>
    </location>
</feature>
<feature type="region of interest" description="Domain IV, binds dsDNA" evidence="1">
    <location>
        <begin position="327"/>
        <end position="446"/>
    </location>
</feature>
<feature type="compositionally biased region" description="Polar residues" evidence="2">
    <location>
        <begin position="96"/>
        <end position="107"/>
    </location>
</feature>
<feature type="binding site" evidence="1">
    <location>
        <position position="154"/>
    </location>
    <ligand>
        <name>ATP</name>
        <dbReference type="ChEBI" id="CHEBI:30616"/>
    </ligand>
</feature>
<feature type="binding site" evidence="1">
    <location>
        <position position="156"/>
    </location>
    <ligand>
        <name>ATP</name>
        <dbReference type="ChEBI" id="CHEBI:30616"/>
    </ligand>
</feature>
<feature type="binding site" evidence="1">
    <location>
        <position position="157"/>
    </location>
    <ligand>
        <name>ATP</name>
        <dbReference type="ChEBI" id="CHEBI:30616"/>
    </ligand>
</feature>
<feature type="binding site" evidence="1">
    <location>
        <position position="158"/>
    </location>
    <ligand>
        <name>ATP</name>
        <dbReference type="ChEBI" id="CHEBI:30616"/>
    </ligand>
</feature>
<accession>B7HPR7</accession>
<keyword id="KW-0067">ATP-binding</keyword>
<keyword id="KW-0963">Cytoplasm</keyword>
<keyword id="KW-0235">DNA replication</keyword>
<keyword id="KW-0238">DNA-binding</keyword>
<keyword id="KW-0446">Lipid-binding</keyword>
<keyword id="KW-0547">Nucleotide-binding</keyword>
<organism>
    <name type="scientific">Bacillus cereus (strain AH187)</name>
    <dbReference type="NCBI Taxonomy" id="405534"/>
    <lineage>
        <taxon>Bacteria</taxon>
        <taxon>Bacillati</taxon>
        <taxon>Bacillota</taxon>
        <taxon>Bacilli</taxon>
        <taxon>Bacillales</taxon>
        <taxon>Bacillaceae</taxon>
        <taxon>Bacillus</taxon>
        <taxon>Bacillus cereus group</taxon>
    </lineage>
</organism>
<gene>
    <name evidence="1" type="primary">dnaA</name>
    <name type="ordered locus">BCAH187_A0001</name>
</gene>
<protein>
    <recommendedName>
        <fullName evidence="1">Chromosomal replication initiator protein DnaA</fullName>
    </recommendedName>
</protein>
<sequence length="446" mass="50527">MENISDLWNSALKELEKKVSKPSYETWLKSTTAHNLKKDVLTITAPNEFARDWLESHYSELISETLYDLTGAKLAIRFIIPQSQAEEEIDLPPSKPNSAQDDSNHLPQSMLNPKYTFDTFVIGSGNRFAHAASLAVAEAPAKAYNPLFIYGGVGLGKTHLMHAIGHYVIEHNPNAKVVYLSSEKFTNEFINSIRDNKAVDFRNKYRNVDVLLIDDIQFLAGKEQTQEEFFHTFNALHEESKQIVISSDRPPKEIPTLEDRLRSRFEWGLITDITPPDLETRIAILRKKAKAEGLDIPNEVMLYIANQIDSNIRELEGALIRVVAYSSLINKDINADLAAEALKDIIPNSKPKIISIYDIQKAVGDVYQVKLEDFKAKKRTKSVAFPRQIAMYLSRELTDSSLPKIGEEFGGRDHTTVIHAHEKISKLLKTDTQLQKQVEEINDILK</sequence>
<evidence type="ECO:0000255" key="1">
    <source>
        <dbReference type="HAMAP-Rule" id="MF_00377"/>
    </source>
</evidence>
<evidence type="ECO:0000256" key="2">
    <source>
        <dbReference type="SAM" id="MobiDB-lite"/>
    </source>
</evidence>
<proteinExistence type="inferred from homology"/>
<comment type="function">
    <text evidence="1">Plays an essential role in the initiation and regulation of chromosomal replication. ATP-DnaA binds to the origin of replication (oriC) to initiate formation of the DNA replication initiation complex once per cell cycle. Binds the DnaA box (a 9 base pair repeat at the origin) and separates the double-stranded (ds)DNA. Forms a right-handed helical filament on oriC DNA; dsDNA binds to the exterior of the filament while single-stranded (ss)DNA is stabiized in the filament's interior. The ATP-DnaA-oriC complex binds and stabilizes one strand of the AT-rich DNA unwinding element (DUE), permitting loading of DNA polymerase. After initiation quickly degrades to an ADP-DnaA complex that is not apt for DNA replication. Binds acidic phospholipids.</text>
</comment>
<comment type="subunit">
    <text evidence="1">Oligomerizes as a right-handed, spiral filament on DNA at oriC.</text>
</comment>
<comment type="subcellular location">
    <subcellularLocation>
        <location evidence="1">Cytoplasm</location>
    </subcellularLocation>
</comment>
<comment type="domain">
    <text evidence="1">Domain I is involved in oligomerization and binding regulators, domain II is flexibile and of varying length in different bacteria, domain III forms the AAA+ region, while domain IV binds dsDNA.</text>
</comment>
<comment type="similarity">
    <text evidence="1">Belongs to the DnaA family.</text>
</comment>
<reference key="1">
    <citation type="submission" date="2008-10" db="EMBL/GenBank/DDBJ databases">
        <title>Genome sequence of Bacillus cereus AH187.</title>
        <authorList>
            <person name="Dodson R.J."/>
            <person name="Durkin A.S."/>
            <person name="Rosovitz M.J."/>
            <person name="Rasko D.A."/>
            <person name="Kolsto A.B."/>
            <person name="Okstad O.A."/>
            <person name="Ravel J."/>
            <person name="Sutton G."/>
        </authorList>
    </citation>
    <scope>NUCLEOTIDE SEQUENCE [LARGE SCALE GENOMIC DNA]</scope>
    <source>
        <strain>AH187</strain>
    </source>
</reference>